<gene>
    <name type="primary">ZHD1</name>
    <name type="synonym">HB22</name>
    <name type="synonym">MEE68</name>
    <name type="ordered locus">At4g24660</name>
    <name type="ORF">F22K18.140</name>
</gene>
<feature type="chain" id="PRO_0000056846" description="Zinc-finger homeodomain protein 2">
    <location>
        <begin position="1"/>
        <end position="220"/>
    </location>
</feature>
<feature type="zinc finger region" description="ZF-HD dimerization-type" evidence="2">
    <location>
        <begin position="49"/>
        <end position="98"/>
    </location>
</feature>
<feature type="DNA-binding region" description="Homeobox; atypical">
    <location>
        <begin position="157"/>
        <end position="220"/>
    </location>
</feature>
<feature type="region of interest" description="Disordered" evidence="3">
    <location>
        <begin position="1"/>
        <end position="40"/>
    </location>
</feature>
<feature type="region of interest" description="Disordered" evidence="3">
    <location>
        <begin position="100"/>
        <end position="160"/>
    </location>
</feature>
<feature type="compositionally biased region" description="Acidic residues" evidence="3">
    <location>
        <begin position="1"/>
        <end position="11"/>
    </location>
</feature>
<feature type="compositionally biased region" description="Gly residues" evidence="3">
    <location>
        <begin position="31"/>
        <end position="40"/>
    </location>
</feature>
<feature type="site" description="Required for DNA-binding" evidence="1">
    <location>
        <position position="209"/>
    </location>
</feature>
<feature type="helix" evidence="7">
    <location>
        <begin position="166"/>
        <end position="179"/>
    </location>
</feature>
<feature type="helix" evidence="7">
    <location>
        <begin position="189"/>
        <end position="197"/>
    </location>
</feature>
<feature type="helix" evidence="7">
    <location>
        <begin position="202"/>
        <end position="210"/>
    </location>
</feature>
<dbReference type="EMBL" id="AL035356">
    <property type="protein sequence ID" value="CAA22997.1"/>
    <property type="molecule type" value="Genomic_DNA"/>
</dbReference>
<dbReference type="EMBL" id="AL161561">
    <property type="protein sequence ID" value="CAB79376.1"/>
    <property type="molecule type" value="Genomic_DNA"/>
</dbReference>
<dbReference type="EMBL" id="CP002687">
    <property type="protein sequence ID" value="AEE84939.1"/>
    <property type="molecule type" value="Genomic_DNA"/>
</dbReference>
<dbReference type="EMBL" id="AF439841">
    <property type="protein sequence ID" value="AAL27510.1"/>
    <property type="molecule type" value="mRNA"/>
</dbReference>
<dbReference type="EMBL" id="AY125563">
    <property type="protein sequence ID" value="AAM78073.1"/>
    <property type="molecule type" value="mRNA"/>
</dbReference>
<dbReference type="PIR" id="T05568">
    <property type="entry name" value="T05568"/>
</dbReference>
<dbReference type="RefSeq" id="NP_194197.1">
    <property type="nucleotide sequence ID" value="NM_118599.2"/>
</dbReference>
<dbReference type="PDB" id="1WH7">
    <property type="method" value="NMR"/>
    <property type="chains" value="A=148-214"/>
</dbReference>
<dbReference type="PDBsum" id="1WH7"/>
<dbReference type="BMRB" id="Q9SB61"/>
<dbReference type="SMR" id="Q9SB61"/>
<dbReference type="BioGRID" id="13857">
    <property type="interactions" value="3"/>
</dbReference>
<dbReference type="FunCoup" id="Q9SB61">
    <property type="interactions" value="295"/>
</dbReference>
<dbReference type="IntAct" id="Q9SB61">
    <property type="interactions" value="11"/>
</dbReference>
<dbReference type="STRING" id="3702.Q9SB61"/>
<dbReference type="PaxDb" id="3702-AT4G24660.1"/>
<dbReference type="ProteomicsDB" id="232337"/>
<dbReference type="EnsemblPlants" id="AT4G24660.1">
    <property type="protein sequence ID" value="AT4G24660.1"/>
    <property type="gene ID" value="AT4G24660"/>
</dbReference>
<dbReference type="GeneID" id="828568"/>
<dbReference type="Gramene" id="AT4G24660.1">
    <property type="protein sequence ID" value="AT4G24660.1"/>
    <property type="gene ID" value="AT4G24660"/>
</dbReference>
<dbReference type="KEGG" id="ath:AT4G24660"/>
<dbReference type="Araport" id="AT4G24660"/>
<dbReference type="TAIR" id="AT4G24660">
    <property type="gene designation" value="HB22"/>
</dbReference>
<dbReference type="eggNOG" id="ENOG502QRG0">
    <property type="taxonomic scope" value="Eukaryota"/>
</dbReference>
<dbReference type="HOGENOM" id="CLU_039237_2_2_1"/>
<dbReference type="InParanoid" id="Q9SB61"/>
<dbReference type="OMA" id="EMPIATH"/>
<dbReference type="OrthoDB" id="1921929at2759"/>
<dbReference type="PhylomeDB" id="Q9SB61"/>
<dbReference type="EvolutionaryTrace" id="Q9SB61"/>
<dbReference type="PRO" id="PR:Q9SB61"/>
<dbReference type="Proteomes" id="UP000006548">
    <property type="component" value="Chromosome 4"/>
</dbReference>
<dbReference type="ExpressionAtlas" id="Q9SB61">
    <property type="expression patterns" value="baseline and differential"/>
</dbReference>
<dbReference type="GO" id="GO:0005634">
    <property type="term" value="C:nucleus"/>
    <property type="evidence" value="ECO:0000250"/>
    <property type="project" value="UniProtKB"/>
</dbReference>
<dbReference type="GO" id="GO:0003677">
    <property type="term" value="F:DNA binding"/>
    <property type="evidence" value="ECO:0000250"/>
    <property type="project" value="TAIR"/>
</dbReference>
<dbReference type="GO" id="GO:0042803">
    <property type="term" value="F:protein homodimerization activity"/>
    <property type="evidence" value="ECO:0000314"/>
    <property type="project" value="UniProtKB"/>
</dbReference>
<dbReference type="GO" id="GO:0008270">
    <property type="term" value="F:zinc ion binding"/>
    <property type="evidence" value="ECO:0007669"/>
    <property type="project" value="UniProtKB-KW"/>
</dbReference>
<dbReference type="GO" id="GO:0009793">
    <property type="term" value="P:embryo development ending in seed dormancy"/>
    <property type="evidence" value="ECO:0000315"/>
    <property type="project" value="TAIR"/>
</dbReference>
<dbReference type="FunFam" id="1.10.10.60:FF:000257">
    <property type="entry name" value="Zinc-finger homeodomain protein 2"/>
    <property type="match status" value="1"/>
</dbReference>
<dbReference type="Gene3D" id="1.10.10.60">
    <property type="entry name" value="Homeodomain-like"/>
    <property type="match status" value="1"/>
</dbReference>
<dbReference type="InterPro" id="IPR009057">
    <property type="entry name" value="Homeodomain-like_sf"/>
</dbReference>
<dbReference type="InterPro" id="IPR006455">
    <property type="entry name" value="Homeodomain_ZF_HD"/>
</dbReference>
<dbReference type="InterPro" id="IPR006456">
    <property type="entry name" value="ZF_HD_homeobox_Cys/His_dimer"/>
</dbReference>
<dbReference type="NCBIfam" id="TIGR01565">
    <property type="entry name" value="homeo_ZF_HD"/>
    <property type="match status" value="1"/>
</dbReference>
<dbReference type="NCBIfam" id="TIGR01566">
    <property type="entry name" value="ZF_HD_prot_N"/>
    <property type="match status" value="1"/>
</dbReference>
<dbReference type="PANTHER" id="PTHR31948">
    <property type="entry name" value="ZINC-FINGER HOMEODOMAIN PROTEIN 2"/>
    <property type="match status" value="1"/>
</dbReference>
<dbReference type="PANTHER" id="PTHR31948:SF140">
    <property type="entry name" value="ZINC-FINGER HOMEODOMAIN PROTEIN 2"/>
    <property type="match status" value="1"/>
</dbReference>
<dbReference type="Pfam" id="PF04770">
    <property type="entry name" value="ZF-HD_dimer"/>
    <property type="match status" value="1"/>
</dbReference>
<dbReference type="SUPFAM" id="SSF46689">
    <property type="entry name" value="Homeodomain-like"/>
    <property type="match status" value="1"/>
</dbReference>
<dbReference type="PROSITE" id="PS51523">
    <property type="entry name" value="ZF_HD_DIMER"/>
    <property type="match status" value="1"/>
</dbReference>
<protein>
    <recommendedName>
        <fullName>Zinc-finger homeodomain protein 2</fullName>
        <shortName>AtZHD2</shortName>
    </recommendedName>
    <alternativeName>
        <fullName>Homeobox protein 22</fullName>
        <shortName>AtHB-22</shortName>
    </alternativeName>
    <alternativeName>
        <fullName>Protein MATERNAL EFFECT EMBRYO ARREST 68</fullName>
    </alternativeName>
</protein>
<reference key="1">
    <citation type="journal article" date="1999" name="Nature">
        <title>Sequence and analysis of chromosome 4 of the plant Arabidopsis thaliana.</title>
        <authorList>
            <person name="Mayer K.F.X."/>
            <person name="Schueller C."/>
            <person name="Wambutt R."/>
            <person name="Murphy G."/>
            <person name="Volckaert G."/>
            <person name="Pohl T."/>
            <person name="Duesterhoeft A."/>
            <person name="Stiekema W."/>
            <person name="Entian K.-D."/>
            <person name="Terryn N."/>
            <person name="Harris B."/>
            <person name="Ansorge W."/>
            <person name="Brandt P."/>
            <person name="Grivell L.A."/>
            <person name="Rieger M."/>
            <person name="Weichselgartner M."/>
            <person name="de Simone V."/>
            <person name="Obermaier B."/>
            <person name="Mache R."/>
            <person name="Mueller M."/>
            <person name="Kreis M."/>
            <person name="Delseny M."/>
            <person name="Puigdomenech P."/>
            <person name="Watson M."/>
            <person name="Schmidtheini T."/>
            <person name="Reichert B."/>
            <person name="Portetelle D."/>
            <person name="Perez-Alonso M."/>
            <person name="Boutry M."/>
            <person name="Bancroft I."/>
            <person name="Vos P."/>
            <person name="Hoheisel J."/>
            <person name="Zimmermann W."/>
            <person name="Wedler H."/>
            <person name="Ridley P."/>
            <person name="Langham S.-A."/>
            <person name="McCullagh B."/>
            <person name="Bilham L."/>
            <person name="Robben J."/>
            <person name="van der Schueren J."/>
            <person name="Grymonprez B."/>
            <person name="Chuang Y.-J."/>
            <person name="Vandenbussche F."/>
            <person name="Braeken M."/>
            <person name="Weltjens I."/>
            <person name="Voet M."/>
            <person name="Bastiaens I."/>
            <person name="Aert R."/>
            <person name="Defoor E."/>
            <person name="Weitzenegger T."/>
            <person name="Bothe G."/>
            <person name="Ramsperger U."/>
            <person name="Hilbert H."/>
            <person name="Braun M."/>
            <person name="Holzer E."/>
            <person name="Brandt A."/>
            <person name="Peters S."/>
            <person name="van Staveren M."/>
            <person name="Dirkse W."/>
            <person name="Mooijman P."/>
            <person name="Klein Lankhorst R."/>
            <person name="Rose M."/>
            <person name="Hauf J."/>
            <person name="Koetter P."/>
            <person name="Berneiser S."/>
            <person name="Hempel S."/>
            <person name="Feldpausch M."/>
            <person name="Lamberth S."/>
            <person name="Van den Daele H."/>
            <person name="De Keyser A."/>
            <person name="Buysshaert C."/>
            <person name="Gielen J."/>
            <person name="Villarroel R."/>
            <person name="De Clercq R."/>
            <person name="van Montagu M."/>
            <person name="Rogers J."/>
            <person name="Cronin A."/>
            <person name="Quail M.A."/>
            <person name="Bray-Allen S."/>
            <person name="Clark L."/>
            <person name="Doggett J."/>
            <person name="Hall S."/>
            <person name="Kay M."/>
            <person name="Lennard N."/>
            <person name="McLay K."/>
            <person name="Mayes R."/>
            <person name="Pettett A."/>
            <person name="Rajandream M.A."/>
            <person name="Lyne M."/>
            <person name="Benes V."/>
            <person name="Rechmann S."/>
            <person name="Borkova D."/>
            <person name="Bloecker H."/>
            <person name="Scharfe M."/>
            <person name="Grimm M."/>
            <person name="Loehnert T.-H."/>
            <person name="Dose S."/>
            <person name="de Haan M."/>
            <person name="Maarse A.C."/>
            <person name="Schaefer M."/>
            <person name="Mueller-Auer S."/>
            <person name="Gabel C."/>
            <person name="Fuchs M."/>
            <person name="Fartmann B."/>
            <person name="Granderath K."/>
            <person name="Dauner D."/>
            <person name="Herzl A."/>
            <person name="Neumann S."/>
            <person name="Argiriou A."/>
            <person name="Vitale D."/>
            <person name="Liguori R."/>
            <person name="Piravandi E."/>
            <person name="Massenet O."/>
            <person name="Quigley F."/>
            <person name="Clabauld G."/>
            <person name="Muendlein A."/>
            <person name="Felber R."/>
            <person name="Schnabl S."/>
            <person name="Hiller R."/>
            <person name="Schmidt W."/>
            <person name="Lecharny A."/>
            <person name="Aubourg S."/>
            <person name="Chefdor F."/>
            <person name="Cooke R."/>
            <person name="Berger C."/>
            <person name="Monfort A."/>
            <person name="Casacuberta E."/>
            <person name="Gibbons T."/>
            <person name="Weber N."/>
            <person name="Vandenbol M."/>
            <person name="Bargues M."/>
            <person name="Terol J."/>
            <person name="Torres A."/>
            <person name="Perez-Perez A."/>
            <person name="Purnelle B."/>
            <person name="Bent E."/>
            <person name="Johnson S."/>
            <person name="Tacon D."/>
            <person name="Jesse T."/>
            <person name="Heijnen L."/>
            <person name="Schwarz S."/>
            <person name="Scholler P."/>
            <person name="Heber S."/>
            <person name="Francs P."/>
            <person name="Bielke C."/>
            <person name="Frishman D."/>
            <person name="Haase D."/>
            <person name="Lemcke K."/>
            <person name="Mewes H.-W."/>
            <person name="Stocker S."/>
            <person name="Zaccaria P."/>
            <person name="Bevan M."/>
            <person name="Wilson R.K."/>
            <person name="de la Bastide M."/>
            <person name="Habermann K."/>
            <person name="Parnell L."/>
            <person name="Dedhia N."/>
            <person name="Gnoj L."/>
            <person name="Schutz K."/>
            <person name="Huang E."/>
            <person name="Spiegel L."/>
            <person name="Sekhon M."/>
            <person name="Murray J."/>
            <person name="Sheet P."/>
            <person name="Cordes M."/>
            <person name="Abu-Threideh J."/>
            <person name="Stoneking T."/>
            <person name="Kalicki J."/>
            <person name="Graves T."/>
            <person name="Harmon G."/>
            <person name="Edwards J."/>
            <person name="Latreille P."/>
            <person name="Courtney L."/>
            <person name="Cloud J."/>
            <person name="Abbott A."/>
            <person name="Scott K."/>
            <person name="Johnson D."/>
            <person name="Minx P."/>
            <person name="Bentley D."/>
            <person name="Fulton B."/>
            <person name="Miller N."/>
            <person name="Greco T."/>
            <person name="Kemp K."/>
            <person name="Kramer J."/>
            <person name="Fulton L."/>
            <person name="Mardis E."/>
            <person name="Dante M."/>
            <person name="Pepin K."/>
            <person name="Hillier L.W."/>
            <person name="Nelson J."/>
            <person name="Spieth J."/>
            <person name="Ryan E."/>
            <person name="Andrews S."/>
            <person name="Geisel C."/>
            <person name="Layman D."/>
            <person name="Du H."/>
            <person name="Ali J."/>
            <person name="Berghoff A."/>
            <person name="Jones K."/>
            <person name="Drone K."/>
            <person name="Cotton M."/>
            <person name="Joshu C."/>
            <person name="Antonoiu B."/>
            <person name="Zidanic M."/>
            <person name="Strong C."/>
            <person name="Sun H."/>
            <person name="Lamar B."/>
            <person name="Yordan C."/>
            <person name="Ma P."/>
            <person name="Zhong J."/>
            <person name="Preston R."/>
            <person name="Vil D."/>
            <person name="Shekher M."/>
            <person name="Matero A."/>
            <person name="Shah R."/>
            <person name="Swaby I.K."/>
            <person name="O'Shaughnessy A."/>
            <person name="Rodriguez M."/>
            <person name="Hoffman J."/>
            <person name="Till S."/>
            <person name="Granat S."/>
            <person name="Shohdy N."/>
            <person name="Hasegawa A."/>
            <person name="Hameed A."/>
            <person name="Lodhi M."/>
            <person name="Johnson A."/>
            <person name="Chen E."/>
            <person name="Marra M.A."/>
            <person name="Martienssen R."/>
            <person name="McCombie W.R."/>
        </authorList>
    </citation>
    <scope>NUCLEOTIDE SEQUENCE [LARGE SCALE GENOMIC DNA]</scope>
    <source>
        <strain>cv. Columbia</strain>
    </source>
</reference>
<reference key="2">
    <citation type="journal article" date="2017" name="Plant J.">
        <title>Araport11: a complete reannotation of the Arabidopsis thaliana reference genome.</title>
        <authorList>
            <person name="Cheng C.Y."/>
            <person name="Krishnakumar V."/>
            <person name="Chan A.P."/>
            <person name="Thibaud-Nissen F."/>
            <person name="Schobel S."/>
            <person name="Town C.D."/>
        </authorList>
    </citation>
    <scope>GENOME REANNOTATION</scope>
    <source>
        <strain>cv. Columbia</strain>
    </source>
</reference>
<reference key="3">
    <citation type="journal article" date="2003" name="Science">
        <title>Empirical analysis of transcriptional activity in the Arabidopsis genome.</title>
        <authorList>
            <person name="Yamada K."/>
            <person name="Lim J."/>
            <person name="Dale J.M."/>
            <person name="Chen H."/>
            <person name="Shinn P."/>
            <person name="Palm C.J."/>
            <person name="Southwick A.M."/>
            <person name="Wu H.C."/>
            <person name="Kim C.J."/>
            <person name="Nguyen M."/>
            <person name="Pham P.K."/>
            <person name="Cheuk R.F."/>
            <person name="Karlin-Newmann G."/>
            <person name="Liu S.X."/>
            <person name="Lam B."/>
            <person name="Sakano H."/>
            <person name="Wu T."/>
            <person name="Yu G."/>
            <person name="Miranda M."/>
            <person name="Quach H.L."/>
            <person name="Tripp M."/>
            <person name="Chang C.H."/>
            <person name="Lee J.M."/>
            <person name="Toriumi M.J."/>
            <person name="Chan M.M."/>
            <person name="Tang C.C."/>
            <person name="Onodera C.S."/>
            <person name="Deng J.M."/>
            <person name="Akiyama K."/>
            <person name="Ansari Y."/>
            <person name="Arakawa T."/>
            <person name="Banh J."/>
            <person name="Banno F."/>
            <person name="Bowser L."/>
            <person name="Brooks S.Y."/>
            <person name="Carninci P."/>
            <person name="Chao Q."/>
            <person name="Choy N."/>
            <person name="Enju A."/>
            <person name="Goldsmith A.D."/>
            <person name="Gurjal M."/>
            <person name="Hansen N.F."/>
            <person name="Hayashizaki Y."/>
            <person name="Johnson-Hopson C."/>
            <person name="Hsuan V.W."/>
            <person name="Iida K."/>
            <person name="Karnes M."/>
            <person name="Khan S."/>
            <person name="Koesema E."/>
            <person name="Ishida J."/>
            <person name="Jiang P.X."/>
            <person name="Jones T."/>
            <person name="Kawai J."/>
            <person name="Kamiya A."/>
            <person name="Meyers C."/>
            <person name="Nakajima M."/>
            <person name="Narusaka M."/>
            <person name="Seki M."/>
            <person name="Sakurai T."/>
            <person name="Satou M."/>
            <person name="Tamse R."/>
            <person name="Vaysberg M."/>
            <person name="Wallender E.K."/>
            <person name="Wong C."/>
            <person name="Yamamura Y."/>
            <person name="Yuan S."/>
            <person name="Shinozaki K."/>
            <person name="Davis R.W."/>
            <person name="Theologis A."/>
            <person name="Ecker J.R."/>
        </authorList>
    </citation>
    <scope>NUCLEOTIDE SEQUENCE [LARGE SCALE MRNA]</scope>
    <source>
        <strain>cv. Columbia</strain>
    </source>
</reference>
<reference key="4">
    <citation type="journal article" date="2001" name="Plant Mol. Biol.">
        <title>Characterization of a novel class of plant homeodomain proteins that bind to the C4 phosphoenolpyruvate carboxylase gene of Flaveria trinervia.</title>
        <authorList>
            <person name="Windhoevel A."/>
            <person name="Hein I."/>
            <person name="Dabrowa R."/>
            <person name="Stockhaus J."/>
        </authorList>
    </citation>
    <scope>IDENTIFICATION</scope>
</reference>
<reference key="5">
    <citation type="journal article" date="2005" name="Development">
        <title>Genetic and molecular identification of genes required for female gametophyte development and function in Arabidopsis.</title>
        <authorList>
            <person name="Pagnussat G.C."/>
            <person name="Yu H.-J."/>
            <person name="Ngo Q.A."/>
            <person name="Rajani S."/>
            <person name="Mayalagu S."/>
            <person name="Johnson C.S."/>
            <person name="Capron A."/>
            <person name="Xie L.-F."/>
            <person name="Ye D."/>
            <person name="Sundaresan V."/>
        </authorList>
    </citation>
    <scope>DISRUPTION PHENOTYPE</scope>
</reference>
<reference key="6">
    <citation type="journal article" date="2006" name="Plant Physiol.">
        <title>The Arabidopsis zinc finger-homeodomain genes encode proteins with unique biochemical properties that are coordinately expressed during floral development.</title>
        <authorList>
            <person name="Tan Q.K."/>
            <person name="Irish V.F."/>
        </authorList>
    </citation>
    <scope>HOMODIMERIZATION</scope>
    <scope>INTERACTION WITH ZHD1; ZHD3; ZHD4; ZHD5; ZHD6; ZHD7; ZHD8; ZHD9; ZHD10 AND ZHD11</scope>
    <scope>TISSUE SPECIFICITY</scope>
    <scope>GENE FAMILY</scope>
</reference>
<reference key="7">
    <citation type="journal article" date="2008" name="J. Integr. Plant Biol.">
        <title>Phylogenetic analysis of the plant-specific zinc finger-homeobox and mini zinc finger gene families.</title>
        <authorList>
            <person name="Hu W."/>
            <person name="dePamphilis C.W."/>
            <person name="Ma H."/>
        </authorList>
    </citation>
    <scope>GENE FAMILY</scope>
    <scope>NOMENCLATURE</scope>
</reference>
<reference key="8">
    <citation type="journal article" date="2011" name="J. Biol. Chem.">
        <title>Nuclear import and DNA binding of the ZHD5 transcription factor is modulated by a competitive peptide inhibitor in Arabidopsis.</title>
        <authorList>
            <person name="Hong S.-Y."/>
            <person name="Kim O.-K."/>
            <person name="Kim S.-G."/>
            <person name="Yang M.-S."/>
            <person name="Park C.-M."/>
        </authorList>
    </citation>
    <scope>GENE FAMILY</scope>
    <scope>NOMENCLATURE</scope>
    <source>
        <strain>cv. Columbia</strain>
    </source>
</reference>
<reference key="9">
    <citation type="submission" date="2004-11" db="PDB data bank">
        <title>Solution structure of homeobox domain of Arabidopsis thaliana hypothetical protein F22K18.140.</title>
        <authorList>
            <consortium name="RIKEN structural genomics initiative (RSGI)"/>
        </authorList>
    </citation>
    <scope>STRUCTURE BY NMR OF 148-215</scope>
</reference>
<evidence type="ECO:0000250" key="1"/>
<evidence type="ECO:0000255" key="2">
    <source>
        <dbReference type="PROSITE-ProRule" id="PRU00856"/>
    </source>
</evidence>
<evidence type="ECO:0000256" key="3">
    <source>
        <dbReference type="SAM" id="MobiDB-lite"/>
    </source>
</evidence>
<evidence type="ECO:0000269" key="4">
    <source>
    </source>
</evidence>
<evidence type="ECO:0000269" key="5">
    <source>
    </source>
</evidence>
<evidence type="ECO:0000305" key="6"/>
<evidence type="ECO:0007829" key="7">
    <source>
        <dbReference type="PDB" id="1WH7"/>
    </source>
</evidence>
<sequence>MNFEDQEEDMEMSGVNPPCGYDSLSGEGATSSGGGGVGRSKGVGAKIRYRECLKNHAVNIGGHAVDGCCEFMPSGEDGTLDALKCAACGCHRNFHRKETESIGGRAHRVPTYYNRPPQPHQPPGYLHLTSPAAPYRPPAASGDEEDTSNPSSSGGTTKRFRTKFTAEQKEKMLAFAERLGWRIQKHDDVAVEQFCAETGVRRQVLKIWMHNNKNSLGKKP</sequence>
<name>ZHD2_ARATH</name>
<comment type="function">
    <text>Essential protein. Putative transcription factor.</text>
</comment>
<comment type="subunit">
    <text evidence="5">Homo or heterodimer. Interacts with ZHD1, ZHD3, ZHD4, ZHD5, ZHD6, ZHD7, ZHD8, ZHD9, ZHD10 and ZHD11.</text>
</comment>
<comment type="interaction">
    <interactant intactId="EBI-1806256">
        <id>Q9SB61</id>
    </interactant>
    <interactant intactId="EBI-1806405">
        <id>Q9LXG0</id>
        <label>ZHD8</label>
    </interactant>
    <organismsDiffer>false</organismsDiffer>
    <experiments>3</experiments>
</comment>
<comment type="subcellular location">
    <subcellularLocation>
        <location evidence="6">Nucleus</location>
    </subcellularLocation>
</comment>
<comment type="tissue specificity">
    <text evidence="5">Mostly expressed in flowers and, to a lower extent, in inflorescence, stems and leaves.</text>
</comment>
<comment type="domain">
    <text>The homeodomain differs form the typical one by having namely 4 instead of 3 extra amino acids inserted in the loop between helix 1 and helix 2.</text>
</comment>
<comment type="disruption phenotype">
    <text evidence="4">Arrested at early embryo stages.</text>
</comment>
<keyword id="KW-0002">3D-structure</keyword>
<keyword id="KW-0238">DNA-binding</keyword>
<keyword id="KW-0371">Homeobox</keyword>
<keyword id="KW-0479">Metal-binding</keyword>
<keyword id="KW-0539">Nucleus</keyword>
<keyword id="KW-1185">Reference proteome</keyword>
<keyword id="KW-0804">Transcription</keyword>
<keyword id="KW-0805">Transcription regulation</keyword>
<keyword id="KW-0862">Zinc</keyword>
<keyword id="KW-0863">Zinc-finger</keyword>
<organism>
    <name type="scientific">Arabidopsis thaliana</name>
    <name type="common">Mouse-ear cress</name>
    <dbReference type="NCBI Taxonomy" id="3702"/>
    <lineage>
        <taxon>Eukaryota</taxon>
        <taxon>Viridiplantae</taxon>
        <taxon>Streptophyta</taxon>
        <taxon>Embryophyta</taxon>
        <taxon>Tracheophyta</taxon>
        <taxon>Spermatophyta</taxon>
        <taxon>Magnoliopsida</taxon>
        <taxon>eudicotyledons</taxon>
        <taxon>Gunneridae</taxon>
        <taxon>Pentapetalae</taxon>
        <taxon>rosids</taxon>
        <taxon>malvids</taxon>
        <taxon>Brassicales</taxon>
        <taxon>Brassicaceae</taxon>
        <taxon>Camelineae</taxon>
        <taxon>Arabidopsis</taxon>
    </lineage>
</organism>
<accession>Q9SB61</accession>
<proteinExistence type="evidence at protein level"/>